<keyword id="KW-0963">Cytoplasm</keyword>
<keyword id="KW-0444">Lipid biosynthesis</keyword>
<keyword id="KW-0443">Lipid metabolism</keyword>
<keyword id="KW-0594">Phospholipid biosynthesis</keyword>
<keyword id="KW-1208">Phospholipid metabolism</keyword>
<keyword id="KW-1185">Reference proteome</keyword>
<keyword id="KW-0808">Transferase</keyword>
<organism>
    <name type="scientific">Thermoanaerobacter pseudethanolicus (strain ATCC 33223 / 39E)</name>
    <name type="common">Clostridium thermohydrosulfuricum</name>
    <dbReference type="NCBI Taxonomy" id="340099"/>
    <lineage>
        <taxon>Bacteria</taxon>
        <taxon>Bacillati</taxon>
        <taxon>Bacillota</taxon>
        <taxon>Clostridia</taxon>
        <taxon>Thermoanaerobacterales</taxon>
        <taxon>Thermoanaerobacteraceae</taxon>
        <taxon>Thermoanaerobacter</taxon>
    </lineage>
</organism>
<proteinExistence type="inferred from homology"/>
<gene>
    <name evidence="1" type="primary">plsX</name>
    <name type="ordered locus">Teth39_1291</name>
</gene>
<accession>B0K9Y2</accession>
<protein>
    <recommendedName>
        <fullName evidence="1">Phosphate acyltransferase</fullName>
        <ecNumber evidence="1">2.3.1.274</ecNumber>
    </recommendedName>
    <alternativeName>
        <fullName evidence="1">Acyl-ACP phosphotransacylase</fullName>
    </alternativeName>
    <alternativeName>
        <fullName evidence="1">Acyl-[acyl-carrier-protein]--phosphate acyltransferase</fullName>
    </alternativeName>
    <alternativeName>
        <fullName evidence="1">Phosphate-acyl-ACP acyltransferase</fullName>
    </alternativeName>
</protein>
<comment type="function">
    <text evidence="1">Catalyzes the reversible formation of acyl-phosphate (acyl-PO(4)) from acyl-[acyl-carrier-protein] (acyl-ACP). This enzyme utilizes acyl-ACP as fatty acyl donor, but not acyl-CoA.</text>
</comment>
<comment type="catalytic activity">
    <reaction evidence="1">
        <text>a fatty acyl-[ACP] + phosphate = an acyl phosphate + holo-[ACP]</text>
        <dbReference type="Rhea" id="RHEA:42292"/>
        <dbReference type="Rhea" id="RHEA-COMP:9685"/>
        <dbReference type="Rhea" id="RHEA-COMP:14125"/>
        <dbReference type="ChEBI" id="CHEBI:43474"/>
        <dbReference type="ChEBI" id="CHEBI:59918"/>
        <dbReference type="ChEBI" id="CHEBI:64479"/>
        <dbReference type="ChEBI" id="CHEBI:138651"/>
        <dbReference type="EC" id="2.3.1.274"/>
    </reaction>
</comment>
<comment type="pathway">
    <text evidence="1">Lipid metabolism; phospholipid metabolism.</text>
</comment>
<comment type="subunit">
    <text evidence="1">Homodimer. Probably interacts with PlsY.</text>
</comment>
<comment type="subcellular location">
    <subcellularLocation>
        <location evidence="1">Cytoplasm</location>
    </subcellularLocation>
    <text evidence="1">Associated with the membrane possibly through PlsY.</text>
</comment>
<comment type="similarity">
    <text evidence="1">Belongs to the PlsX family.</text>
</comment>
<feature type="chain" id="PRO_1000089945" description="Phosphate acyltransferase">
    <location>
        <begin position="1"/>
        <end position="332"/>
    </location>
</feature>
<evidence type="ECO:0000255" key="1">
    <source>
        <dbReference type="HAMAP-Rule" id="MF_00019"/>
    </source>
</evidence>
<dbReference type="EC" id="2.3.1.274" evidence="1"/>
<dbReference type="EMBL" id="CP000924">
    <property type="protein sequence ID" value="ABY94945.1"/>
    <property type="molecule type" value="Genomic_DNA"/>
</dbReference>
<dbReference type="RefSeq" id="WP_012269378.1">
    <property type="nucleotide sequence ID" value="NC_010321.1"/>
</dbReference>
<dbReference type="SMR" id="B0K9Y2"/>
<dbReference type="STRING" id="340099.Teth39_1291"/>
<dbReference type="KEGG" id="tpd:Teth39_1291"/>
<dbReference type="eggNOG" id="COG0416">
    <property type="taxonomic scope" value="Bacteria"/>
</dbReference>
<dbReference type="HOGENOM" id="CLU_039379_1_1_9"/>
<dbReference type="UniPathway" id="UPA00085"/>
<dbReference type="Proteomes" id="UP000002156">
    <property type="component" value="Chromosome"/>
</dbReference>
<dbReference type="GO" id="GO:0005737">
    <property type="term" value="C:cytoplasm"/>
    <property type="evidence" value="ECO:0007669"/>
    <property type="project" value="UniProtKB-SubCell"/>
</dbReference>
<dbReference type="GO" id="GO:0043811">
    <property type="term" value="F:phosphate:acyl-[acyl carrier protein] acyltransferase activity"/>
    <property type="evidence" value="ECO:0007669"/>
    <property type="project" value="UniProtKB-UniRule"/>
</dbReference>
<dbReference type="GO" id="GO:0006633">
    <property type="term" value="P:fatty acid biosynthetic process"/>
    <property type="evidence" value="ECO:0007669"/>
    <property type="project" value="UniProtKB-UniRule"/>
</dbReference>
<dbReference type="GO" id="GO:0008654">
    <property type="term" value="P:phospholipid biosynthetic process"/>
    <property type="evidence" value="ECO:0007669"/>
    <property type="project" value="UniProtKB-KW"/>
</dbReference>
<dbReference type="Gene3D" id="3.40.718.10">
    <property type="entry name" value="Isopropylmalate Dehydrogenase"/>
    <property type="match status" value="1"/>
</dbReference>
<dbReference type="HAMAP" id="MF_00019">
    <property type="entry name" value="PlsX"/>
    <property type="match status" value="1"/>
</dbReference>
<dbReference type="InterPro" id="IPR003664">
    <property type="entry name" value="FA_synthesis"/>
</dbReference>
<dbReference type="InterPro" id="IPR012281">
    <property type="entry name" value="Phospholipid_synth_PlsX-like"/>
</dbReference>
<dbReference type="NCBIfam" id="TIGR00182">
    <property type="entry name" value="plsX"/>
    <property type="match status" value="1"/>
</dbReference>
<dbReference type="PANTHER" id="PTHR30100">
    <property type="entry name" value="FATTY ACID/PHOSPHOLIPID SYNTHESIS PROTEIN PLSX"/>
    <property type="match status" value="1"/>
</dbReference>
<dbReference type="PANTHER" id="PTHR30100:SF1">
    <property type="entry name" value="PHOSPHATE ACYLTRANSFERASE"/>
    <property type="match status" value="1"/>
</dbReference>
<dbReference type="Pfam" id="PF02504">
    <property type="entry name" value="FA_synthesis"/>
    <property type="match status" value="1"/>
</dbReference>
<dbReference type="PIRSF" id="PIRSF002465">
    <property type="entry name" value="Phsphlp_syn_PlsX"/>
    <property type="match status" value="1"/>
</dbReference>
<dbReference type="SUPFAM" id="SSF53659">
    <property type="entry name" value="Isocitrate/Isopropylmalate dehydrogenase-like"/>
    <property type="match status" value="1"/>
</dbReference>
<reference key="1">
    <citation type="submission" date="2008-01" db="EMBL/GenBank/DDBJ databases">
        <title>Complete sequence of Thermoanaerobacter pseudethanolicus 39E.</title>
        <authorList>
            <person name="Copeland A."/>
            <person name="Lucas S."/>
            <person name="Lapidus A."/>
            <person name="Barry K."/>
            <person name="Glavina del Rio T."/>
            <person name="Dalin E."/>
            <person name="Tice H."/>
            <person name="Pitluck S."/>
            <person name="Bruce D."/>
            <person name="Goodwin L."/>
            <person name="Saunders E."/>
            <person name="Brettin T."/>
            <person name="Detter J.C."/>
            <person name="Han C."/>
            <person name="Schmutz J."/>
            <person name="Larimer F."/>
            <person name="Land M."/>
            <person name="Hauser L."/>
            <person name="Kyrpides N."/>
            <person name="Lykidis A."/>
            <person name="Hemme C."/>
            <person name="Fields M.W."/>
            <person name="He Z."/>
            <person name="Zhou J."/>
            <person name="Richardson P."/>
        </authorList>
    </citation>
    <scope>NUCLEOTIDE SEQUENCE [LARGE SCALE GENOMIC DNA]</scope>
    <source>
        <strain>ATCC 33223 / DSM 2355 / 39E</strain>
    </source>
</reference>
<sequence>MRLAIDAMGGDHAPEEIIKGSLEALKHFQDIEIVLIGKEEVLRGLQRKEKRLKLVYASEVIENDEAPVTAVRKKKDSSMIVGLELLKKEEVDAFLSAGNTGALMAGALLTLGRIKGIDRPALAPILPTLNGATVLLDAGSNTNCDAQNLVQFAVMGHVYAQKMFEIERPRVGLFNIGAEEEKGNEVVKKAFEELKKSKLNFIGNVEGRDIPYGVCEVVVCDGFVGNAILKSMEGIASVISQLLKEELTRNIFTKLGALLIMGGLKRITKKMDYTEYGGAPLLGIKKPVIKAHGNSKAKAIFNAIKQAKNFVDNDVLNHIKEEIESMGDELSV</sequence>
<name>PLSX_THEP3</name>